<evidence type="ECO:0000255" key="1">
    <source>
        <dbReference type="HAMAP-Rule" id="MF_00291"/>
    </source>
</evidence>
<evidence type="ECO:0000305" key="2"/>
<reference key="1">
    <citation type="journal article" date="2010" name="ISME J.">
        <title>The complete genome sequence of the algal symbiont Dinoroseobacter shibae: a hitchhiker's guide to life in the sea.</title>
        <authorList>
            <person name="Wagner-Dobler I."/>
            <person name="Ballhausen B."/>
            <person name="Berger M."/>
            <person name="Brinkhoff T."/>
            <person name="Buchholz I."/>
            <person name="Bunk B."/>
            <person name="Cypionka H."/>
            <person name="Daniel R."/>
            <person name="Drepper T."/>
            <person name="Gerdts G."/>
            <person name="Hahnke S."/>
            <person name="Han C."/>
            <person name="Jahn D."/>
            <person name="Kalhoefer D."/>
            <person name="Kiss H."/>
            <person name="Klenk H.P."/>
            <person name="Kyrpides N."/>
            <person name="Liebl W."/>
            <person name="Liesegang H."/>
            <person name="Meincke L."/>
            <person name="Pati A."/>
            <person name="Petersen J."/>
            <person name="Piekarski T."/>
            <person name="Pommerenke C."/>
            <person name="Pradella S."/>
            <person name="Pukall R."/>
            <person name="Rabus R."/>
            <person name="Stackebrandt E."/>
            <person name="Thole S."/>
            <person name="Thompson L."/>
            <person name="Tielen P."/>
            <person name="Tomasch J."/>
            <person name="von Jan M."/>
            <person name="Wanphrut N."/>
            <person name="Wichels A."/>
            <person name="Zech H."/>
            <person name="Simon M."/>
        </authorList>
    </citation>
    <scope>NUCLEOTIDE SEQUENCE [LARGE SCALE GENOMIC DNA]</scope>
    <source>
        <strain>DSM 16493 / NCIMB 14021 / DFL 12</strain>
    </source>
</reference>
<accession>A8LK91</accession>
<dbReference type="EMBL" id="CP000830">
    <property type="protein sequence ID" value="ABV93290.1"/>
    <property type="molecule type" value="Genomic_DNA"/>
</dbReference>
<dbReference type="RefSeq" id="WP_012178220.1">
    <property type="nucleotide sequence ID" value="NC_009952.1"/>
</dbReference>
<dbReference type="SMR" id="A8LK91"/>
<dbReference type="STRING" id="398580.Dshi_1548"/>
<dbReference type="KEGG" id="dsh:Dshi_1548"/>
<dbReference type="eggNOG" id="COG0052">
    <property type="taxonomic scope" value="Bacteria"/>
</dbReference>
<dbReference type="HOGENOM" id="CLU_040318_2_1_5"/>
<dbReference type="OrthoDB" id="9808036at2"/>
<dbReference type="Proteomes" id="UP000006833">
    <property type="component" value="Chromosome"/>
</dbReference>
<dbReference type="GO" id="GO:0022627">
    <property type="term" value="C:cytosolic small ribosomal subunit"/>
    <property type="evidence" value="ECO:0007669"/>
    <property type="project" value="TreeGrafter"/>
</dbReference>
<dbReference type="GO" id="GO:0003735">
    <property type="term" value="F:structural constituent of ribosome"/>
    <property type="evidence" value="ECO:0007669"/>
    <property type="project" value="InterPro"/>
</dbReference>
<dbReference type="GO" id="GO:0006412">
    <property type="term" value="P:translation"/>
    <property type="evidence" value="ECO:0007669"/>
    <property type="project" value="UniProtKB-UniRule"/>
</dbReference>
<dbReference type="CDD" id="cd01425">
    <property type="entry name" value="RPS2"/>
    <property type="match status" value="1"/>
</dbReference>
<dbReference type="Gene3D" id="3.40.50.10490">
    <property type="entry name" value="Glucose-6-phosphate isomerase like protein, domain 1"/>
    <property type="match status" value="1"/>
</dbReference>
<dbReference type="Gene3D" id="1.10.287.610">
    <property type="entry name" value="Helix hairpin bin"/>
    <property type="match status" value="1"/>
</dbReference>
<dbReference type="HAMAP" id="MF_00291_B">
    <property type="entry name" value="Ribosomal_uS2_B"/>
    <property type="match status" value="1"/>
</dbReference>
<dbReference type="InterPro" id="IPR001865">
    <property type="entry name" value="Ribosomal_uS2"/>
</dbReference>
<dbReference type="InterPro" id="IPR005706">
    <property type="entry name" value="Ribosomal_uS2_bac/mit/plastid"/>
</dbReference>
<dbReference type="InterPro" id="IPR018130">
    <property type="entry name" value="Ribosomal_uS2_CS"/>
</dbReference>
<dbReference type="InterPro" id="IPR023591">
    <property type="entry name" value="Ribosomal_uS2_flav_dom_sf"/>
</dbReference>
<dbReference type="NCBIfam" id="TIGR01011">
    <property type="entry name" value="rpsB_bact"/>
    <property type="match status" value="1"/>
</dbReference>
<dbReference type="PANTHER" id="PTHR12534">
    <property type="entry name" value="30S RIBOSOMAL PROTEIN S2 PROKARYOTIC AND ORGANELLAR"/>
    <property type="match status" value="1"/>
</dbReference>
<dbReference type="PANTHER" id="PTHR12534:SF0">
    <property type="entry name" value="SMALL RIBOSOMAL SUBUNIT PROTEIN US2M"/>
    <property type="match status" value="1"/>
</dbReference>
<dbReference type="Pfam" id="PF00318">
    <property type="entry name" value="Ribosomal_S2"/>
    <property type="match status" value="1"/>
</dbReference>
<dbReference type="PRINTS" id="PR00395">
    <property type="entry name" value="RIBOSOMALS2"/>
</dbReference>
<dbReference type="SUPFAM" id="SSF52313">
    <property type="entry name" value="Ribosomal protein S2"/>
    <property type="match status" value="1"/>
</dbReference>
<dbReference type="PROSITE" id="PS00962">
    <property type="entry name" value="RIBOSOMAL_S2_1"/>
    <property type="match status" value="1"/>
</dbReference>
<dbReference type="PROSITE" id="PS00963">
    <property type="entry name" value="RIBOSOMAL_S2_2"/>
    <property type="match status" value="1"/>
</dbReference>
<comment type="similarity">
    <text evidence="1">Belongs to the universal ribosomal protein uS2 family.</text>
</comment>
<keyword id="KW-1185">Reference proteome</keyword>
<keyword id="KW-0687">Ribonucleoprotein</keyword>
<keyword id="KW-0689">Ribosomal protein</keyword>
<organism>
    <name type="scientific">Dinoroseobacter shibae (strain DSM 16493 / NCIMB 14021 / DFL 12)</name>
    <dbReference type="NCBI Taxonomy" id="398580"/>
    <lineage>
        <taxon>Bacteria</taxon>
        <taxon>Pseudomonadati</taxon>
        <taxon>Pseudomonadota</taxon>
        <taxon>Alphaproteobacteria</taxon>
        <taxon>Rhodobacterales</taxon>
        <taxon>Roseobacteraceae</taxon>
        <taxon>Dinoroseobacter</taxon>
    </lineage>
</organism>
<sequence length="259" mass="27833">MALPDFNIRQLLEAGVHFGHQTQRWNPRMAPYIYGDRNGIHIMDLTQTVPMLDQALQAVRDTVAKGGRVLFVGTKRQAQKPIAEAAERCAQYYMNHRWLGGTLTNWKTVSNSIGRLKSIDEAMEGGFEGLTKKERLGMERDQGKLQASLGGIREMGGVPDLIFVIDVKKEDLAIAEANKLGIPVVAVVDTNCSPDGVDYVIPGNDDAARAIALYCDLVARAALDGMSAQLGAAGVDLGALEEGGVEEALAEEAAAPAES</sequence>
<proteinExistence type="inferred from homology"/>
<gene>
    <name evidence="1" type="primary">rpsB</name>
    <name type="ordered locus">Dshi_1548</name>
</gene>
<feature type="chain" id="PRO_1000078879" description="Small ribosomal subunit protein uS2">
    <location>
        <begin position="1"/>
        <end position="259"/>
    </location>
</feature>
<name>RS2_DINSH</name>
<protein>
    <recommendedName>
        <fullName evidence="1">Small ribosomal subunit protein uS2</fullName>
    </recommendedName>
    <alternativeName>
        <fullName evidence="2">30S ribosomal protein S2</fullName>
    </alternativeName>
</protein>